<comment type="function">
    <text evidence="1 2 3">Processive glucosyltransferase involved in the biosynthesis of both the bilayer- and non-bilayer-forming membrane glucolipids. Is able to successively transfer two glucosyl residues to diacylglycerol (DAG), thereby catalyzing the formation of beta-monoglucosyl-DAG (3-O-(beta-D-glucopyranosyl)-1,2-diacyl-sn-glycerol) and beta-diglucosyl-DAG (3-O-(beta-D-glucopyranosyl-beta-(1-&gt;6)-D-glucopyranosyl)-1,2-diacyl-sn-glycerol). Beta-diglucosyl-DAG is the predominant glycolipid found in Bacillales and is also used as a membrane anchor for lipoteichoic acid (LTA). UgtP can only use UDP-glucose as sugar donor.</text>
</comment>
<comment type="catalytic activity">
    <reaction evidence="2">
        <text>a 1,2-diacyl-3-O-(beta-D-glucopyranosyl)-sn-glycerol + UDP-alpha-D-glucose = a 1,2-diacyl-3-O-(beta-D-Glc-(1-&gt;6)-beta-D-Glc)-sn-glycerol + UDP + H(+)</text>
        <dbReference type="Rhea" id="RHEA:39031"/>
        <dbReference type="ChEBI" id="CHEBI:15378"/>
        <dbReference type="ChEBI" id="CHEBI:58223"/>
        <dbReference type="ChEBI" id="CHEBI:58885"/>
        <dbReference type="ChEBI" id="CHEBI:75799"/>
        <dbReference type="ChEBI" id="CHEBI:76264"/>
        <dbReference type="EC" id="2.4.1.315"/>
    </reaction>
</comment>
<comment type="catalytic activity">
    <reaction evidence="1 2">
        <text>a 1,2-diacyl-sn-glycerol + UDP-alpha-D-glucose = a 1,2-diacyl-3-O-(beta-D-glucopyranosyl)-sn-glycerol + UDP + H(+)</text>
        <dbReference type="Rhea" id="RHEA:17285"/>
        <dbReference type="ChEBI" id="CHEBI:15378"/>
        <dbReference type="ChEBI" id="CHEBI:17815"/>
        <dbReference type="ChEBI" id="CHEBI:58223"/>
        <dbReference type="ChEBI" id="CHEBI:58885"/>
        <dbReference type="ChEBI" id="CHEBI:75799"/>
    </reaction>
</comment>
<comment type="biophysicochemical properties">
    <kinetics>
        <KM evidence="2">0.7 mM for UDP-glucose (at 15 degrees Celsius)</KM>
    </kinetics>
    <phDependence>
        <text evidence="2">Optimum pH is 7.5.</text>
    </phDependence>
</comment>
<comment type="pathway">
    <text evidence="1 3">Glycolipid metabolism; diglucosyl-diacylglycerol biosynthesis.</text>
</comment>
<comment type="subcellular location">
    <subcellularLocation>
        <location evidence="1 2">Cell membrane</location>
    </subcellularLocation>
</comment>
<comment type="disruption phenotype">
    <text evidence="2">Cells lacking this gene are defective in beta-diglucosyl-DAG and are smaller than wild-type. Diacylglycerol (DAG) is the anchor of the LTA in the mutant.</text>
</comment>
<comment type="similarity">
    <text evidence="1">Belongs to the glycosyltransferase 28 family. UgtP subfamily.</text>
</comment>
<reference key="1">
    <citation type="book" date="2006" name="Gram positive pathogens, 2nd edition">
        <title>The Staphylococcus aureus NCTC 8325 genome.</title>
        <editorList>
            <person name="Fischetti V."/>
            <person name="Novick R."/>
            <person name="Ferretti J."/>
            <person name="Portnoy D."/>
            <person name="Rood J."/>
        </editorList>
        <authorList>
            <person name="Gillaspy A.F."/>
            <person name="Worrell V."/>
            <person name="Orvis J."/>
            <person name="Roe B.A."/>
            <person name="Dyer D.W."/>
            <person name="Iandolo J.J."/>
        </authorList>
    </citation>
    <scope>NUCLEOTIDE SEQUENCE [LARGE SCALE GENOMIC DNA]</scope>
    <source>
        <strain>NCTC 8325 / PS 47</strain>
    </source>
</reference>
<reference key="2">
    <citation type="journal article" date="2001" name="J. Bacteriol.">
        <title>Biosynthesis of the glycolipid anchor in lipoteichoic acid of Staphylococcus aureus RN4220: role of YpfP, the diglucosyldiacylglycerol synthase.</title>
        <authorList>
            <person name="Kiriukhin M.Y."/>
            <person name="Debabov D.V."/>
            <person name="Shinabarger D.L."/>
            <person name="Neuhaus F.C."/>
        </authorList>
    </citation>
    <scope>FUNCTION</scope>
    <scope>CATALYTIC ACTIVITY</scope>
    <scope>BIOPHYSICOCHEMICAL PROPERTIES</scope>
    <scope>SUBCELLULAR LOCATION</scope>
    <scope>ROLE IN GLYCOLIPID AND LTA BIOSYNTHESIS</scope>
    <scope>DISRUPTION PHENOTYPE</scope>
    <source>
        <strain>RN4220</strain>
    </source>
</reference>
<reference key="3">
    <citation type="journal article" date="2007" name="J. Bacteriol.">
        <title>Genes required for glycolipid synthesis and lipoteichoic acid anchoring in Staphylococcus aureus.</title>
        <authorList>
            <person name="Gruendling A."/>
            <person name="Schneewind O."/>
        </authorList>
    </citation>
    <scope>PATHWAY</scope>
    <scope>ROLE IN GLYCOLIPID AND LTA BIOSYNTHESIS</scope>
    <source>
        <strain>RN4220</strain>
    </source>
</reference>
<feature type="chain" id="PRO_0000308444" description="Processive diacylglycerol beta-glucosyltransferase">
    <location>
        <begin position="1"/>
        <end position="391"/>
    </location>
</feature>
<protein>
    <recommendedName>
        <fullName evidence="1">Processive diacylglycerol beta-glucosyltransferase</fullName>
        <ecNumber>2.4.1.315</ecNumber>
    </recommendedName>
    <alternativeName>
        <fullName evidence="1">Beta-diglucosyldiacylglycerol synthase</fullName>
        <shortName evidence="1">Beta-DGS</shortName>
        <shortName evidence="1">DGlcDAG synthase</shortName>
        <shortName evidence="1">Glc2-DAG synthase</shortName>
    </alternativeName>
    <alternativeName>
        <fullName evidence="1">Beta-gentiobiosyldiacylglycerol synthase</fullName>
    </alternativeName>
    <alternativeName>
        <fullName evidence="1">Beta-monoglucosyldiacylglycerol synthase</fullName>
        <shortName evidence="1">Beta-MGS</shortName>
        <shortName evidence="1">MGlcDAG synthase</shortName>
    </alternativeName>
    <alternativeName>
        <fullName>Diglucosyl diacylglycerol synthase (1,6-linking)</fullName>
    </alternativeName>
    <alternativeName>
        <fullName evidence="1">Glucosyl-beta-1,6-glucosyldiacylglycerol synthase</fullName>
    </alternativeName>
    <alternativeName>
        <fullName evidence="1">UDP glucosyltransferase</fullName>
    </alternativeName>
    <alternativeName>
        <fullName evidence="1">UDP-glucose:1,2-diacylglycerol-3-beta-D-glucosyltransferase</fullName>
    </alternativeName>
</protein>
<proteinExistence type="evidence at protein level"/>
<sequence>MVTQNKKILIITGSFGNGHMQVTQSIVNQLNDMNLDHLSVIEHDLFMEAHPILTSICKKWYINSFKYFRNMYKGFYYSRPDKLDKCFYKYYGLNKLINLLIKEKPDLILLTFPTPVMSVLTEQFNINIPVATVMTDYRLHKNWITPYSTRYYVATKETKQDFIDVGIDPSTVKVTGIPIDNKFETPINQKQWLIDNNLDPDKQTILMSAGAFGVSKGFDTMITDILAKSANAQVVMICGKSKELKRSLTAKFKSNENVLILGYTKHMNEWMASSQLMITKPGGITITEGFARCIPMIFLNPAPGQELENALYFEEKGFGKIADTPEEAIKIVASLTNGNEQLTNMISTMEQDKIKYATQTICRDLLDLIGHSSQPQEIYGKVPLYARFFVK</sequence>
<name>UGTP_STAA8</name>
<organism>
    <name type="scientific">Staphylococcus aureus (strain NCTC 8325 / PS 47)</name>
    <dbReference type="NCBI Taxonomy" id="93061"/>
    <lineage>
        <taxon>Bacteria</taxon>
        <taxon>Bacillati</taxon>
        <taxon>Bacillota</taxon>
        <taxon>Bacilli</taxon>
        <taxon>Bacillales</taxon>
        <taxon>Staphylococcaceae</taxon>
        <taxon>Staphylococcus</taxon>
    </lineage>
</organism>
<dbReference type="EC" id="2.4.1.315"/>
<dbReference type="EMBL" id="CP000253">
    <property type="protein sequence ID" value="ABD30078.1"/>
    <property type="molecule type" value="Genomic_DNA"/>
</dbReference>
<dbReference type="RefSeq" id="WP_000258650.1">
    <property type="nucleotide sequence ID" value="NZ_LS483365.1"/>
</dbReference>
<dbReference type="RefSeq" id="YP_499506.1">
    <property type="nucleotide sequence ID" value="NC_007795.1"/>
</dbReference>
<dbReference type="SMR" id="Q2FZP7"/>
<dbReference type="STRING" id="93061.SAOUHSC_00953"/>
<dbReference type="CAZy" id="GT28">
    <property type="family name" value="Glycosyltransferase Family 28"/>
</dbReference>
<dbReference type="PaxDb" id="1280-SAXN108_1014"/>
<dbReference type="GeneID" id="3920664"/>
<dbReference type="KEGG" id="sao:SAOUHSC_00953"/>
<dbReference type="PATRIC" id="fig|93061.5.peg.875"/>
<dbReference type="eggNOG" id="COG0707">
    <property type="taxonomic scope" value="Bacteria"/>
</dbReference>
<dbReference type="HOGENOM" id="CLU_028367_0_1_9"/>
<dbReference type="OrthoDB" id="9815663at2"/>
<dbReference type="BioCyc" id="MetaCyc:MONOMER-20002"/>
<dbReference type="UniPathway" id="UPA00894"/>
<dbReference type="PRO" id="PR:Q2FZP7"/>
<dbReference type="Proteomes" id="UP000008816">
    <property type="component" value="Chromosome"/>
</dbReference>
<dbReference type="GO" id="GO:0005886">
    <property type="term" value="C:plasma membrane"/>
    <property type="evidence" value="ECO:0007669"/>
    <property type="project" value="UniProtKB-SubCell"/>
</dbReference>
<dbReference type="GO" id="GO:0047228">
    <property type="term" value="F:1,2-diacylglycerol 3-glucosyltransferase activity"/>
    <property type="evidence" value="ECO:0000314"/>
    <property type="project" value="UniProtKB"/>
</dbReference>
<dbReference type="GO" id="GO:0009246">
    <property type="term" value="P:enterobacterial common antigen biosynthetic process"/>
    <property type="evidence" value="ECO:0007669"/>
    <property type="project" value="UniProtKB-UniPathway"/>
</dbReference>
<dbReference type="GO" id="GO:0009247">
    <property type="term" value="P:glycolipid biosynthetic process"/>
    <property type="evidence" value="ECO:0007669"/>
    <property type="project" value="UniProtKB-UniRule"/>
</dbReference>
<dbReference type="GO" id="GO:0070395">
    <property type="term" value="P:lipoteichoic acid biosynthetic process"/>
    <property type="evidence" value="ECO:0007669"/>
    <property type="project" value="UniProtKB-UniRule"/>
</dbReference>
<dbReference type="CDD" id="cd17507">
    <property type="entry name" value="GT28_Beta-DGS-like"/>
    <property type="match status" value="1"/>
</dbReference>
<dbReference type="Gene3D" id="3.40.50.2000">
    <property type="entry name" value="Glycogen Phosphorylase B"/>
    <property type="match status" value="2"/>
</dbReference>
<dbReference type="HAMAP" id="MF_01280">
    <property type="entry name" value="Diacylglyc_glucosyltr"/>
    <property type="match status" value="1"/>
</dbReference>
<dbReference type="InterPro" id="IPR009695">
    <property type="entry name" value="Diacylglyc_glucosyltr_N"/>
</dbReference>
<dbReference type="InterPro" id="IPR007235">
    <property type="entry name" value="Glyco_trans_28_C"/>
</dbReference>
<dbReference type="InterPro" id="IPR050519">
    <property type="entry name" value="Glycosyltransf_28_UgtP"/>
</dbReference>
<dbReference type="InterPro" id="IPR023589">
    <property type="entry name" value="Pro_diacylglycrl_glcsylTrfase"/>
</dbReference>
<dbReference type="NCBIfam" id="NF010134">
    <property type="entry name" value="PRK13608.1"/>
    <property type="match status" value="1"/>
</dbReference>
<dbReference type="PANTHER" id="PTHR43025">
    <property type="entry name" value="MONOGALACTOSYLDIACYLGLYCEROL SYNTHASE"/>
    <property type="match status" value="1"/>
</dbReference>
<dbReference type="PANTHER" id="PTHR43025:SF3">
    <property type="entry name" value="MONOGALACTOSYLDIACYLGLYCEROL SYNTHASE 1, CHLOROPLASTIC"/>
    <property type="match status" value="1"/>
</dbReference>
<dbReference type="Pfam" id="PF04101">
    <property type="entry name" value="Glyco_tran_28_C"/>
    <property type="match status" value="1"/>
</dbReference>
<dbReference type="Pfam" id="PF06925">
    <property type="entry name" value="MGDG_synth"/>
    <property type="match status" value="1"/>
</dbReference>
<dbReference type="SUPFAM" id="SSF53756">
    <property type="entry name" value="UDP-Glycosyltransferase/glycogen phosphorylase"/>
    <property type="match status" value="1"/>
</dbReference>
<keyword id="KW-0119">Carbohydrate metabolism</keyword>
<keyword id="KW-1003">Cell membrane</keyword>
<keyword id="KW-0328">Glycosyltransferase</keyword>
<keyword id="KW-0444">Lipid biosynthesis</keyword>
<keyword id="KW-0443">Lipid metabolism</keyword>
<keyword id="KW-0472">Membrane</keyword>
<keyword id="KW-1185">Reference proteome</keyword>
<keyword id="KW-0808">Transferase</keyword>
<gene>
    <name evidence="1" type="primary">ugtP</name>
    <name type="synonym">ypfP</name>
    <name type="ordered locus">SAOUHSC_00953</name>
</gene>
<accession>Q2FZP7</accession>
<evidence type="ECO:0000255" key="1">
    <source>
        <dbReference type="HAMAP-Rule" id="MF_01280"/>
    </source>
</evidence>
<evidence type="ECO:0000269" key="2">
    <source>
    </source>
</evidence>
<evidence type="ECO:0000269" key="3">
    <source>
    </source>
</evidence>